<protein>
    <recommendedName>
        <fullName evidence="1">Thymidylate synthase</fullName>
        <shortName evidence="1">TS</shortName>
        <shortName evidence="1">TSase</shortName>
        <ecNumber evidence="1">2.1.1.45</ecNumber>
    </recommendedName>
</protein>
<comment type="function">
    <text evidence="1">Catalyzes the reductive methylation of 2'-deoxyuridine-5'-monophosphate (dUMP) to 2'-deoxythymidine-5'-monophosphate (dTMP) while utilizing 5,10-methylenetetrahydrofolate (mTHF) as the methyl donor and reductant in the reaction, yielding dihydrofolate (DHF) as a by-product. This enzymatic reaction provides an intracellular de novo source of dTMP, an essential precursor for DNA biosynthesis.</text>
</comment>
<comment type="catalytic activity">
    <reaction evidence="1">
        <text>dUMP + (6R)-5,10-methylene-5,6,7,8-tetrahydrofolate = 7,8-dihydrofolate + dTMP</text>
        <dbReference type="Rhea" id="RHEA:12104"/>
        <dbReference type="ChEBI" id="CHEBI:15636"/>
        <dbReference type="ChEBI" id="CHEBI:57451"/>
        <dbReference type="ChEBI" id="CHEBI:63528"/>
        <dbReference type="ChEBI" id="CHEBI:246422"/>
        <dbReference type="EC" id="2.1.1.45"/>
    </reaction>
</comment>
<comment type="pathway">
    <text evidence="1">Pyrimidine metabolism; dTTP biosynthesis.</text>
</comment>
<comment type="subunit">
    <text evidence="1">Homodimer.</text>
</comment>
<comment type="subcellular location">
    <subcellularLocation>
        <location evidence="1">Cytoplasm</location>
    </subcellularLocation>
</comment>
<comment type="similarity">
    <text evidence="1">Belongs to the thymidylate synthase family. Bacterial-type ThyA subfamily.</text>
</comment>
<organism>
    <name type="scientific">Pseudomonas aeruginosa (strain LESB58)</name>
    <dbReference type="NCBI Taxonomy" id="557722"/>
    <lineage>
        <taxon>Bacteria</taxon>
        <taxon>Pseudomonadati</taxon>
        <taxon>Pseudomonadota</taxon>
        <taxon>Gammaproteobacteria</taxon>
        <taxon>Pseudomonadales</taxon>
        <taxon>Pseudomonadaceae</taxon>
        <taxon>Pseudomonas</taxon>
    </lineage>
</organism>
<evidence type="ECO:0000255" key="1">
    <source>
        <dbReference type="HAMAP-Rule" id="MF_00008"/>
    </source>
</evidence>
<feature type="chain" id="PRO_1000197256" description="Thymidylate synthase">
    <location>
        <begin position="1"/>
        <end position="264"/>
    </location>
</feature>
<feature type="active site" description="Nucleophile" evidence="1">
    <location>
        <position position="146"/>
    </location>
</feature>
<feature type="binding site" description="in other chain" evidence="1">
    <location>
        <position position="21"/>
    </location>
    <ligand>
        <name>dUMP</name>
        <dbReference type="ChEBI" id="CHEBI:246422"/>
        <note>ligand shared between dimeric partners</note>
    </ligand>
</feature>
<feature type="binding site" evidence="1">
    <location>
        <position position="51"/>
    </location>
    <ligand>
        <name>(6R)-5,10-methylene-5,6,7,8-tetrahydrofolate</name>
        <dbReference type="ChEBI" id="CHEBI:15636"/>
    </ligand>
</feature>
<feature type="binding site" evidence="1">
    <location>
        <begin position="126"/>
        <end position="127"/>
    </location>
    <ligand>
        <name>dUMP</name>
        <dbReference type="ChEBI" id="CHEBI:246422"/>
        <note>ligand shared between dimeric partners</note>
    </ligand>
</feature>
<feature type="binding site" description="in other chain" evidence="1">
    <location>
        <begin position="166"/>
        <end position="169"/>
    </location>
    <ligand>
        <name>dUMP</name>
        <dbReference type="ChEBI" id="CHEBI:246422"/>
        <note>ligand shared between dimeric partners</note>
    </ligand>
</feature>
<feature type="binding site" evidence="1">
    <location>
        <position position="169"/>
    </location>
    <ligand>
        <name>(6R)-5,10-methylene-5,6,7,8-tetrahydrofolate</name>
        <dbReference type="ChEBI" id="CHEBI:15636"/>
    </ligand>
</feature>
<feature type="binding site" description="in other chain" evidence="1">
    <location>
        <position position="177"/>
    </location>
    <ligand>
        <name>dUMP</name>
        <dbReference type="ChEBI" id="CHEBI:246422"/>
        <note>ligand shared between dimeric partners</note>
    </ligand>
</feature>
<feature type="binding site" description="in other chain" evidence="1">
    <location>
        <begin position="207"/>
        <end position="209"/>
    </location>
    <ligand>
        <name>dUMP</name>
        <dbReference type="ChEBI" id="CHEBI:246422"/>
        <note>ligand shared between dimeric partners</note>
    </ligand>
</feature>
<feature type="binding site" evidence="1">
    <location>
        <position position="263"/>
    </location>
    <ligand>
        <name>(6R)-5,10-methylene-5,6,7,8-tetrahydrofolate</name>
        <dbReference type="ChEBI" id="CHEBI:15636"/>
    </ligand>
</feature>
<keyword id="KW-0963">Cytoplasm</keyword>
<keyword id="KW-0489">Methyltransferase</keyword>
<keyword id="KW-0545">Nucleotide biosynthesis</keyword>
<keyword id="KW-0808">Transferase</keyword>
<accession>B7V2Q5</accession>
<dbReference type="EC" id="2.1.1.45" evidence="1"/>
<dbReference type="EMBL" id="FM209186">
    <property type="protein sequence ID" value="CAW25066.1"/>
    <property type="molecule type" value="Genomic_DNA"/>
</dbReference>
<dbReference type="RefSeq" id="WP_003110588.1">
    <property type="nucleotide sequence ID" value="NC_011770.1"/>
</dbReference>
<dbReference type="SMR" id="B7V2Q5"/>
<dbReference type="KEGG" id="pag:PLES_03391"/>
<dbReference type="HOGENOM" id="CLU_021669_0_0_6"/>
<dbReference type="UniPathway" id="UPA00575"/>
<dbReference type="GO" id="GO:0005829">
    <property type="term" value="C:cytosol"/>
    <property type="evidence" value="ECO:0007669"/>
    <property type="project" value="TreeGrafter"/>
</dbReference>
<dbReference type="GO" id="GO:0004799">
    <property type="term" value="F:thymidylate synthase activity"/>
    <property type="evidence" value="ECO:0007669"/>
    <property type="project" value="UniProtKB-UniRule"/>
</dbReference>
<dbReference type="GO" id="GO:0006231">
    <property type="term" value="P:dTMP biosynthetic process"/>
    <property type="evidence" value="ECO:0007669"/>
    <property type="project" value="UniProtKB-UniRule"/>
</dbReference>
<dbReference type="GO" id="GO:0006235">
    <property type="term" value="P:dTTP biosynthetic process"/>
    <property type="evidence" value="ECO:0007669"/>
    <property type="project" value="UniProtKB-UniRule"/>
</dbReference>
<dbReference type="GO" id="GO:0032259">
    <property type="term" value="P:methylation"/>
    <property type="evidence" value="ECO:0007669"/>
    <property type="project" value="UniProtKB-KW"/>
</dbReference>
<dbReference type="CDD" id="cd00351">
    <property type="entry name" value="TS_Pyrimidine_HMase"/>
    <property type="match status" value="1"/>
</dbReference>
<dbReference type="FunFam" id="3.30.572.10:FF:000001">
    <property type="entry name" value="Thymidylate synthase"/>
    <property type="match status" value="1"/>
</dbReference>
<dbReference type="Gene3D" id="3.30.572.10">
    <property type="entry name" value="Thymidylate synthase/dCMP hydroxymethylase domain"/>
    <property type="match status" value="1"/>
</dbReference>
<dbReference type="HAMAP" id="MF_00008">
    <property type="entry name" value="Thymidy_synth_bact"/>
    <property type="match status" value="1"/>
</dbReference>
<dbReference type="InterPro" id="IPR045097">
    <property type="entry name" value="Thymidate_synth/dCMP_Mease"/>
</dbReference>
<dbReference type="InterPro" id="IPR023451">
    <property type="entry name" value="Thymidate_synth/dCMP_Mease_dom"/>
</dbReference>
<dbReference type="InterPro" id="IPR036926">
    <property type="entry name" value="Thymidate_synth/dCMP_Mease_sf"/>
</dbReference>
<dbReference type="InterPro" id="IPR000398">
    <property type="entry name" value="Thymidylate_synthase"/>
</dbReference>
<dbReference type="InterPro" id="IPR020940">
    <property type="entry name" value="Thymidylate_synthase_AS"/>
</dbReference>
<dbReference type="NCBIfam" id="NF002497">
    <property type="entry name" value="PRK01827.1-3"/>
    <property type="match status" value="1"/>
</dbReference>
<dbReference type="NCBIfam" id="NF002499">
    <property type="entry name" value="PRK01827.1-5"/>
    <property type="match status" value="1"/>
</dbReference>
<dbReference type="NCBIfam" id="TIGR03284">
    <property type="entry name" value="thym_sym"/>
    <property type="match status" value="2"/>
</dbReference>
<dbReference type="PANTHER" id="PTHR11548:SF9">
    <property type="entry name" value="THYMIDYLATE SYNTHASE"/>
    <property type="match status" value="1"/>
</dbReference>
<dbReference type="PANTHER" id="PTHR11548">
    <property type="entry name" value="THYMIDYLATE SYNTHASE 1"/>
    <property type="match status" value="1"/>
</dbReference>
<dbReference type="Pfam" id="PF00303">
    <property type="entry name" value="Thymidylat_synt"/>
    <property type="match status" value="1"/>
</dbReference>
<dbReference type="PRINTS" id="PR00108">
    <property type="entry name" value="THYMDSNTHASE"/>
</dbReference>
<dbReference type="SUPFAM" id="SSF55831">
    <property type="entry name" value="Thymidylate synthase/dCMP hydroxymethylase"/>
    <property type="match status" value="1"/>
</dbReference>
<dbReference type="PROSITE" id="PS00091">
    <property type="entry name" value="THYMIDYLATE_SYNTHASE"/>
    <property type="match status" value="1"/>
</dbReference>
<name>TYSY_PSEA8</name>
<reference key="1">
    <citation type="journal article" date="2009" name="Genome Res.">
        <title>Newly introduced genomic prophage islands are critical determinants of in vivo competitiveness in the Liverpool epidemic strain of Pseudomonas aeruginosa.</title>
        <authorList>
            <person name="Winstanley C."/>
            <person name="Langille M.G.I."/>
            <person name="Fothergill J.L."/>
            <person name="Kukavica-Ibrulj I."/>
            <person name="Paradis-Bleau C."/>
            <person name="Sanschagrin F."/>
            <person name="Thomson N.R."/>
            <person name="Winsor G.L."/>
            <person name="Quail M.A."/>
            <person name="Lennard N."/>
            <person name="Bignell A."/>
            <person name="Clarke L."/>
            <person name="Seeger K."/>
            <person name="Saunders D."/>
            <person name="Harris D."/>
            <person name="Parkhill J."/>
            <person name="Hancock R.E.W."/>
            <person name="Brinkman F.S.L."/>
            <person name="Levesque R.C."/>
        </authorList>
    </citation>
    <scope>NUCLEOTIDE SEQUENCE [LARGE SCALE GENOMIC DNA]</scope>
    <source>
        <strain>LESB58</strain>
    </source>
</reference>
<gene>
    <name evidence="1" type="primary">thyA</name>
    <name type="ordered locus">PLES_03391</name>
</gene>
<sequence>MKQYLDLMRHVREHGTFKSDRTGTGTYSVFGHQMRFDLAAGFPLVTTKKCHLKSIVHELLWFLKGSTNIAYLKEHGVSIWDEWADENGDLGPVYGYQWRSWPAPDGRHIDQIANLMAMLKKNPDSRRLIVSAWNPALIDEMALPPCHALFQFYVADGKLSCQLYQRSADIFLGVPFNIASYALLTLMVAQVAGLQPGEFIWTGGDCHLYANHLEQADLQLTREPLPLPSMKLNPEVKDLFDFRFEDFELVGYEAHPHIKAPVAV</sequence>
<proteinExistence type="inferred from homology"/>